<organism>
    <name type="scientific">Influenza A virus (strain A/Duck/Hong Kong/64/1976 H3)</name>
    <dbReference type="NCBI Taxonomy" id="45412"/>
    <lineage>
        <taxon>Viruses</taxon>
        <taxon>Riboviria</taxon>
        <taxon>Orthornavirae</taxon>
        <taxon>Negarnaviricota</taxon>
        <taxon>Polyploviricotina</taxon>
        <taxon>Insthoviricetes</taxon>
        <taxon>Articulavirales</taxon>
        <taxon>Orthomyxoviridae</taxon>
        <taxon>Alphainfluenzavirus</taxon>
        <taxon>Alphainfluenzavirus influenzae</taxon>
        <taxon>Influenza A virus</taxon>
    </lineage>
</organism>
<sequence length="550" mass="61719">QDLPGTDNSTATLCLGHHAVPNGTIVKTITDDQIEVTNATELVQSSSTGKICNNPHRILDGRDCTLIDALLGDPHCDVFQDETWDLFVERSNAFSNCYPYDVPDYASLRSLVASSGTLEFITEGFTWTGVTQNGGSNACKRGPANGFFSRLNWLTKSGSTYPVLNVTMPNNDNFDKLYIWGVHHPSTNQEQTNLYVQASGRVTVSTRRSQQTIIPNIGSRPWVRGQSGRISIYWTIVKPGDVLVINSNGNLIAPRGYFKMRTGKSSIMRSDALIDTCVSECITPNGSIPNDKPFQNVNKITYGACPKYVKQNTLKLAIGMRNVPEKQTRGLFGAIAGFIENGWEGMIDGWYGFRHQNSEGTGQAADLKSTQAAIDQINGKLNRVIEKTNEKFHQIEKEFSEVEGRIQDLEKYVEDTKIDLWSYNADVLVALENQHTIDLTDSEMNKLFEKTRRQLRENAEDMGNGCFKIYHKCDNACIESIRNGTYDHDIYRDEALNNRFQIKGVELKSGYKDWILWISFAISCFLLCVVLLGFIMWACQRGNIRCNICI</sequence>
<comment type="function">
    <text evidence="1">Binds to sialic acid-containing receptors on the cell surface, bringing about the attachment of the virus particle to the cell. This attachment induces virion internalization either through clathrin-dependent endocytosis or through clathrin- and caveolin-independent pathway. Plays a major role in the determination of host range restriction and virulence. Class I viral fusion protein. Responsible for penetration of the virus into the cell cytoplasm by mediating the fusion of the membrane of the endocytosed virus particle with the endosomal membrane. Low pH in endosomes induces an irreversible conformational change in HA2, releasing the fusion hydrophobic peptide. Several trimers are required to form a competent fusion pore.</text>
</comment>
<comment type="subunit">
    <text evidence="1">Homotrimer of disulfide-linked HA1-HA2.</text>
</comment>
<comment type="subcellular location">
    <subcellularLocation>
        <location evidence="1">Virion membrane</location>
        <topology evidence="1">Single-pass type I membrane protein</topology>
    </subcellularLocation>
    <subcellularLocation>
        <location evidence="1">Host apical cell membrane</location>
        <topology evidence="1">Single-pass type I membrane protein</topology>
    </subcellularLocation>
    <text evidence="1">Targeted to the apical plasma membrane in epithelial polarized cells through a signal present in the transmembrane domain. Associated with glycosphingolipid- and cholesterol-enriched detergent-resistant lipid rafts.</text>
</comment>
<comment type="PTM">
    <text evidence="1">Palmitoylated.</text>
</comment>
<comment type="PTM">
    <text evidence="1">In natural infection, inactive HA is matured into HA1 and HA2 outside the cell by one or more trypsin-like, arginine-specific endoprotease secreted by the bronchial epithelial cells. One identified protease that may be involved in this process is secreted in lungs by club cells.</text>
</comment>
<comment type="miscellaneous">
    <text>Major glycoprotein, comprises over 80% of the envelope proteins present in virus particle.</text>
</comment>
<comment type="miscellaneous">
    <text>The extent of infection into host organism is determined by HA. Influenza viruses bud from the apical surface of polarized epithelial cells (e.g. bronchial epithelial cells) into lumen of lungs and are therefore usually pneumotropic. The reason is that HA is cleaved by tryptase clara which is restricted to lungs. However, HAs of H5 and H7 pantropic avian viruses subtypes can be cleaved by furin and subtilisin-type enzymes, allowing the virus to grow in other organs than lungs.</text>
</comment>
<comment type="miscellaneous">
    <text>The influenza A genome consist of 8 RNA segments. Genetic variation of hemagglutinin and/or neuraminidase genes results in the emergence of new influenza strains. The mechanism of variation can be the result of point mutations or the result of genetic reassortment between segments of two different strains.</text>
</comment>
<comment type="similarity">
    <text evidence="1">Belongs to the influenza viruses hemagglutinin family.</text>
</comment>
<organismHost>
    <name type="scientific">Aves</name>
    <dbReference type="NCBI Taxonomy" id="8782"/>
</organismHost>
<dbReference type="EMBL" id="D00931">
    <property type="protein sequence ID" value="BAA00771.1"/>
    <property type="molecule type" value="Genomic_RNA"/>
</dbReference>
<dbReference type="SMR" id="P43258"/>
<dbReference type="GlyCosmos" id="P43258">
    <property type="glycosylation" value="6 sites, No reported glycans"/>
</dbReference>
<dbReference type="GO" id="GO:0020002">
    <property type="term" value="C:host cell plasma membrane"/>
    <property type="evidence" value="ECO:0007669"/>
    <property type="project" value="UniProtKB-SubCell"/>
</dbReference>
<dbReference type="GO" id="GO:0016020">
    <property type="term" value="C:membrane"/>
    <property type="evidence" value="ECO:0007669"/>
    <property type="project" value="UniProtKB-KW"/>
</dbReference>
<dbReference type="GO" id="GO:0019031">
    <property type="term" value="C:viral envelope"/>
    <property type="evidence" value="ECO:0007669"/>
    <property type="project" value="UniProtKB-KW"/>
</dbReference>
<dbReference type="GO" id="GO:0055036">
    <property type="term" value="C:virion membrane"/>
    <property type="evidence" value="ECO:0007669"/>
    <property type="project" value="UniProtKB-SubCell"/>
</dbReference>
<dbReference type="GO" id="GO:0046789">
    <property type="term" value="F:host cell surface receptor binding"/>
    <property type="evidence" value="ECO:0007669"/>
    <property type="project" value="InterPro"/>
</dbReference>
<dbReference type="GO" id="GO:0075512">
    <property type="term" value="P:clathrin-dependent endocytosis of virus by host cell"/>
    <property type="evidence" value="ECO:0007669"/>
    <property type="project" value="UniProtKB-KW"/>
</dbReference>
<dbReference type="GO" id="GO:0039654">
    <property type="term" value="P:fusion of virus membrane with host endosome membrane"/>
    <property type="evidence" value="ECO:0007669"/>
    <property type="project" value="UniProtKB-KW"/>
</dbReference>
<dbReference type="GO" id="GO:0019064">
    <property type="term" value="P:fusion of virus membrane with host plasma membrane"/>
    <property type="evidence" value="ECO:0007669"/>
    <property type="project" value="InterPro"/>
</dbReference>
<dbReference type="GO" id="GO:0019062">
    <property type="term" value="P:virion attachment to host cell"/>
    <property type="evidence" value="ECO:0007669"/>
    <property type="project" value="UniProtKB-KW"/>
</dbReference>
<dbReference type="FunFam" id="3.90.20.10:FF:000001">
    <property type="entry name" value="Hemagglutinin"/>
    <property type="match status" value="1"/>
</dbReference>
<dbReference type="FunFam" id="3.90.209.20:FF:000001">
    <property type="entry name" value="Hemagglutinin"/>
    <property type="match status" value="1"/>
</dbReference>
<dbReference type="Gene3D" id="3.90.20.10">
    <property type="match status" value="1"/>
</dbReference>
<dbReference type="Gene3D" id="3.90.209.20">
    <property type="match status" value="1"/>
</dbReference>
<dbReference type="HAMAP" id="MF_04072">
    <property type="entry name" value="INFV_HEMA"/>
    <property type="match status" value="1"/>
</dbReference>
<dbReference type="InterPro" id="IPR008980">
    <property type="entry name" value="Capsid_hemagglutn"/>
</dbReference>
<dbReference type="InterPro" id="IPR013828">
    <property type="entry name" value="Hemagglutn_HA1_a/b_dom_sf"/>
</dbReference>
<dbReference type="InterPro" id="IPR000149">
    <property type="entry name" value="Hemagglutn_influenz_A"/>
</dbReference>
<dbReference type="InterPro" id="IPR001364">
    <property type="entry name" value="Hemagglutn_influenz_A/B"/>
</dbReference>
<dbReference type="Pfam" id="PF00509">
    <property type="entry name" value="Hemagglutinin"/>
    <property type="match status" value="1"/>
</dbReference>
<dbReference type="PRINTS" id="PR00330">
    <property type="entry name" value="HEMAGGLUTN1"/>
</dbReference>
<dbReference type="PRINTS" id="PR00329">
    <property type="entry name" value="HEMAGGLUTN12"/>
</dbReference>
<dbReference type="SUPFAM" id="SSF58064">
    <property type="entry name" value="Influenza hemagglutinin (stalk)"/>
    <property type="match status" value="1"/>
</dbReference>
<dbReference type="SUPFAM" id="SSF49818">
    <property type="entry name" value="Viral protein domain"/>
    <property type="match status" value="1"/>
</dbReference>
<keyword id="KW-1167">Clathrin- and caveolin-independent endocytosis of virus by host</keyword>
<keyword id="KW-1165">Clathrin-mediated endocytosis of virus by host</keyword>
<keyword id="KW-1015">Disulfide bond</keyword>
<keyword id="KW-1170">Fusion of virus membrane with host endosomal membrane</keyword>
<keyword id="KW-1168">Fusion of virus membrane with host membrane</keyword>
<keyword id="KW-0325">Glycoprotein</keyword>
<keyword id="KW-0348">Hemagglutinin</keyword>
<keyword id="KW-1032">Host cell membrane</keyword>
<keyword id="KW-1043">Host membrane</keyword>
<keyword id="KW-0945">Host-virus interaction</keyword>
<keyword id="KW-0449">Lipoprotein</keyword>
<keyword id="KW-0472">Membrane</keyword>
<keyword id="KW-0564">Palmitate</keyword>
<keyword id="KW-0812">Transmembrane</keyword>
<keyword id="KW-1133">Transmembrane helix</keyword>
<keyword id="KW-1161">Viral attachment to host cell</keyword>
<keyword id="KW-0261">Viral envelope protein</keyword>
<keyword id="KW-1162">Viral penetration into host cytoplasm</keyword>
<keyword id="KW-0946">Virion</keyword>
<keyword id="KW-1164">Virus endocytosis by host</keyword>
<keyword id="KW-1160">Virus entry into host cell</keyword>
<reference key="1">
    <citation type="journal article" date="1991" name="J. Gen. Virol.">
        <title>Molecular evidence for a role of domestic ducks in the introduction of avian H3 influenza viruses to pigs in southern China, where the A/Hong Kong/68 (H3N2) strain emerged.</title>
        <authorList>
            <person name="Yasuda J."/>
            <person name="Shortridge K.F."/>
            <person name="Shimizu Y."/>
            <person name="Kida H."/>
        </authorList>
    </citation>
    <scope>NUCLEOTIDE SEQUENCE [GENOMIC RNA]</scope>
</reference>
<proteinExistence type="inferred from homology"/>
<gene>
    <name evidence="1" type="primary">HA</name>
</gene>
<accession>P43258</accession>
<protein>
    <recommendedName>
        <fullName evidence="1">Hemagglutinin</fullName>
    </recommendedName>
    <component>
        <recommendedName>
            <fullName evidence="1">Hemagglutinin HA1 chain</fullName>
        </recommendedName>
    </component>
    <component>
        <recommendedName>
            <fullName evidence="1">Hemagglutinin HA2 chain</fullName>
        </recommendedName>
    </component>
</protein>
<feature type="chain" id="PRO_0000038932" description="Hemagglutinin HA1 chain">
    <location>
        <begin position="1"/>
        <end position="328"/>
    </location>
</feature>
<feature type="chain" id="PRO_0000038933" description="Hemagglutinin HA2 chain" evidence="1">
    <location>
        <begin position="330"/>
        <end position="550"/>
    </location>
</feature>
<feature type="topological domain" description="Extracellular" evidence="1">
    <location>
        <begin position="1"/>
        <end position="514"/>
    </location>
</feature>
<feature type="transmembrane region" description="Helical" evidence="1">
    <location>
        <begin position="515"/>
        <end position="535"/>
    </location>
</feature>
<feature type="topological domain" description="Cytoplasmic" evidence="1">
    <location>
        <begin position="536"/>
        <end position="550"/>
    </location>
</feature>
<feature type="site" description="Cleavage; by host" evidence="1">
    <location>
        <begin position="329"/>
        <end position="330"/>
    </location>
</feature>
<feature type="lipid moiety-binding region" description="S-palmitoyl cysteine; by host" evidence="1">
    <location>
        <position position="539"/>
    </location>
</feature>
<feature type="lipid moiety-binding region" description="S-palmitoyl cysteine; by host" evidence="1">
    <location>
        <position position="546"/>
    </location>
</feature>
<feature type="lipid moiety-binding region" description="S-palmitoyl cysteine; by host" evidence="1">
    <location>
        <position position="549"/>
    </location>
</feature>
<feature type="glycosylation site" description="N-linked (GlcNAc...) asparagine; by host" evidence="1">
    <location>
        <position position="8"/>
    </location>
</feature>
<feature type="glycosylation site" description="N-linked (GlcNAc...) asparagine; by host" evidence="1">
    <location>
        <position position="22"/>
    </location>
</feature>
<feature type="glycosylation site" description="N-linked (GlcNAc...) asparagine; by host" evidence="1">
    <location>
        <position position="38"/>
    </location>
</feature>
<feature type="glycosylation site" description="N-linked (GlcNAc...) asparagine; by host" evidence="1">
    <location>
        <position position="165"/>
    </location>
</feature>
<feature type="glycosylation site" description="N-linked (GlcNAc...) asparagine; by host" evidence="1">
    <location>
        <position position="285"/>
    </location>
</feature>
<feature type="glycosylation site" description="N-linked (GlcNAc...) asparagine; by host" evidence="1">
    <location>
        <position position="483"/>
    </location>
</feature>
<feature type="disulfide bond" description="Interchain (between HA1 and HA2 chains)" evidence="1">
    <location>
        <begin position="14"/>
        <end position="466"/>
    </location>
</feature>
<feature type="disulfide bond" evidence="1">
    <location>
        <begin position="52"/>
        <end position="277"/>
    </location>
</feature>
<feature type="disulfide bond" evidence="1">
    <location>
        <begin position="64"/>
        <end position="76"/>
    </location>
</feature>
<feature type="disulfide bond" evidence="1">
    <location>
        <begin position="97"/>
        <end position="139"/>
    </location>
</feature>
<feature type="disulfide bond" evidence="1">
    <location>
        <begin position="281"/>
        <end position="305"/>
    </location>
</feature>
<feature type="disulfide bond" evidence="1">
    <location>
        <begin position="473"/>
        <end position="477"/>
    </location>
</feature>
<feature type="non-terminal residue">
    <location>
        <position position="1"/>
    </location>
</feature>
<evidence type="ECO:0000255" key="1">
    <source>
        <dbReference type="HAMAP-Rule" id="MF_04072"/>
    </source>
</evidence>
<name>HEMA_I76AD</name>